<keyword id="KW-0963">Cytoplasm</keyword>
<keyword id="KW-0489">Methyltransferase</keyword>
<keyword id="KW-1185">Reference proteome</keyword>
<keyword id="KW-0694">RNA-binding</keyword>
<keyword id="KW-0698">rRNA processing</keyword>
<keyword id="KW-0949">S-adenosyl-L-methionine</keyword>
<keyword id="KW-0808">Transferase</keyword>
<protein>
    <recommendedName>
        <fullName evidence="1">Ribosomal RNA small subunit methyltransferase A</fullName>
        <ecNumber evidence="1">2.1.1.182</ecNumber>
    </recommendedName>
    <alternativeName>
        <fullName evidence="1">16S rRNA (adenine(1518)-N(6)/adenine(1519)-N(6))-dimethyltransferase</fullName>
    </alternativeName>
    <alternativeName>
        <fullName evidence="1">16S rRNA dimethyladenosine transferase</fullName>
    </alternativeName>
    <alternativeName>
        <fullName evidence="1">16S rRNA dimethylase</fullName>
    </alternativeName>
    <alternativeName>
        <fullName evidence="1">S-adenosylmethionine-6-N', N'-adenosyl(rRNA) dimethyltransferase</fullName>
    </alternativeName>
</protein>
<reference key="1">
    <citation type="journal article" date="2003" name="J. Bacteriol.">
        <title>Comparative analyses of the complete genome sequences of Pierce's disease and citrus variegated chlorosis strains of Xylella fastidiosa.</title>
        <authorList>
            <person name="Van Sluys M.A."/>
            <person name="de Oliveira M.C."/>
            <person name="Monteiro-Vitorello C.B."/>
            <person name="Miyaki C.Y."/>
            <person name="Furlan L.R."/>
            <person name="Camargo L.E.A."/>
            <person name="da Silva A.C.R."/>
            <person name="Moon D.H."/>
            <person name="Takita M.A."/>
            <person name="Lemos E.G.M."/>
            <person name="Machado M.A."/>
            <person name="Ferro M.I.T."/>
            <person name="da Silva F.R."/>
            <person name="Goldman M.H.S."/>
            <person name="Goldman G.H."/>
            <person name="Lemos M.V.F."/>
            <person name="El-Dorry H."/>
            <person name="Tsai S.M."/>
            <person name="Carrer H."/>
            <person name="Carraro D.M."/>
            <person name="de Oliveira R.C."/>
            <person name="Nunes L.R."/>
            <person name="Siqueira W.J."/>
            <person name="Coutinho L.L."/>
            <person name="Kimura E.T."/>
            <person name="Ferro E.S."/>
            <person name="Harakava R."/>
            <person name="Kuramae E.E."/>
            <person name="Marino C.L."/>
            <person name="Giglioti E."/>
            <person name="Abreu I.L."/>
            <person name="Alves L.M.C."/>
            <person name="do Amaral A.M."/>
            <person name="Baia G.S."/>
            <person name="Blanco S.R."/>
            <person name="Brito M.S."/>
            <person name="Cannavan F.S."/>
            <person name="Celestino A.V."/>
            <person name="da Cunha A.F."/>
            <person name="Fenille R.C."/>
            <person name="Ferro J.A."/>
            <person name="Formighieri E.F."/>
            <person name="Kishi L.T."/>
            <person name="Leoni S.G."/>
            <person name="Oliveira A.R."/>
            <person name="Rosa V.E. Jr."/>
            <person name="Sassaki F.T."/>
            <person name="Sena J.A.D."/>
            <person name="de Souza A.A."/>
            <person name="Truffi D."/>
            <person name="Tsukumo F."/>
            <person name="Yanai G.M."/>
            <person name="Zaros L.G."/>
            <person name="Civerolo E.L."/>
            <person name="Simpson A.J.G."/>
            <person name="Almeida N.F. Jr."/>
            <person name="Setubal J.C."/>
            <person name="Kitajima J.P."/>
        </authorList>
    </citation>
    <scope>NUCLEOTIDE SEQUENCE [LARGE SCALE GENOMIC DNA]</scope>
    <source>
        <strain>Temecula1 / ATCC 700964</strain>
    </source>
</reference>
<proteinExistence type="inferred from homology"/>
<feature type="chain" id="PRO_0000101647" description="Ribosomal RNA small subunit methyltransferase A">
    <location>
        <begin position="1"/>
        <end position="265"/>
    </location>
</feature>
<feature type="binding site" evidence="1">
    <location>
        <position position="17"/>
    </location>
    <ligand>
        <name>S-adenosyl-L-methionine</name>
        <dbReference type="ChEBI" id="CHEBI:59789"/>
    </ligand>
</feature>
<feature type="binding site" evidence="1">
    <location>
        <position position="19"/>
    </location>
    <ligand>
        <name>S-adenosyl-L-methionine</name>
        <dbReference type="ChEBI" id="CHEBI:59789"/>
    </ligand>
</feature>
<feature type="binding site" evidence="1">
    <location>
        <position position="44"/>
    </location>
    <ligand>
        <name>S-adenosyl-L-methionine</name>
        <dbReference type="ChEBI" id="CHEBI:59789"/>
    </ligand>
</feature>
<feature type="binding site" evidence="1">
    <location>
        <position position="65"/>
    </location>
    <ligand>
        <name>S-adenosyl-L-methionine</name>
        <dbReference type="ChEBI" id="CHEBI:59789"/>
    </ligand>
</feature>
<feature type="binding site" evidence="1">
    <location>
        <position position="90"/>
    </location>
    <ligand>
        <name>S-adenosyl-L-methionine</name>
        <dbReference type="ChEBI" id="CHEBI:59789"/>
    </ligand>
</feature>
<feature type="binding site" evidence="1">
    <location>
        <position position="112"/>
    </location>
    <ligand>
        <name>S-adenosyl-L-methionine</name>
        <dbReference type="ChEBI" id="CHEBI:59789"/>
    </ligand>
</feature>
<evidence type="ECO:0000255" key="1">
    <source>
        <dbReference type="HAMAP-Rule" id="MF_00607"/>
    </source>
</evidence>
<dbReference type="EC" id="2.1.1.182" evidence="1"/>
<dbReference type="EMBL" id="AE009442">
    <property type="protein sequence ID" value="AAO29059.1"/>
    <property type="molecule type" value="Genomic_DNA"/>
</dbReference>
<dbReference type="RefSeq" id="WP_011098000.1">
    <property type="nucleotide sequence ID" value="NC_004556.1"/>
</dbReference>
<dbReference type="SMR" id="Q87C85"/>
<dbReference type="KEGG" id="xft:PD_1208"/>
<dbReference type="HOGENOM" id="CLU_041220_0_1_6"/>
<dbReference type="Proteomes" id="UP000002516">
    <property type="component" value="Chromosome"/>
</dbReference>
<dbReference type="GO" id="GO:0005829">
    <property type="term" value="C:cytosol"/>
    <property type="evidence" value="ECO:0007669"/>
    <property type="project" value="TreeGrafter"/>
</dbReference>
<dbReference type="GO" id="GO:0052908">
    <property type="term" value="F:16S rRNA (adenine(1518)-N(6)/adenine(1519)-N(6))-dimethyltransferase activity"/>
    <property type="evidence" value="ECO:0007669"/>
    <property type="project" value="UniProtKB-EC"/>
</dbReference>
<dbReference type="GO" id="GO:0003723">
    <property type="term" value="F:RNA binding"/>
    <property type="evidence" value="ECO:0007669"/>
    <property type="project" value="UniProtKB-KW"/>
</dbReference>
<dbReference type="FunFam" id="1.10.8.100:FF:000001">
    <property type="entry name" value="Ribosomal RNA small subunit methyltransferase A"/>
    <property type="match status" value="1"/>
</dbReference>
<dbReference type="Gene3D" id="1.10.8.100">
    <property type="entry name" value="Ribosomal RNA adenine dimethylase-like, domain 2"/>
    <property type="match status" value="1"/>
</dbReference>
<dbReference type="Gene3D" id="3.40.50.150">
    <property type="entry name" value="Vaccinia Virus protein VP39"/>
    <property type="match status" value="1"/>
</dbReference>
<dbReference type="HAMAP" id="MF_00607">
    <property type="entry name" value="16SrRNA_methyltr_A"/>
    <property type="match status" value="1"/>
</dbReference>
<dbReference type="InterPro" id="IPR001737">
    <property type="entry name" value="KsgA/Erm"/>
</dbReference>
<dbReference type="InterPro" id="IPR023165">
    <property type="entry name" value="rRNA_Ade_diMease-like_C"/>
</dbReference>
<dbReference type="InterPro" id="IPR020596">
    <property type="entry name" value="rRNA_Ade_Mease_Trfase_CS"/>
</dbReference>
<dbReference type="InterPro" id="IPR020598">
    <property type="entry name" value="rRNA_Ade_methylase_Trfase_N"/>
</dbReference>
<dbReference type="InterPro" id="IPR011530">
    <property type="entry name" value="rRNA_adenine_dimethylase"/>
</dbReference>
<dbReference type="InterPro" id="IPR029063">
    <property type="entry name" value="SAM-dependent_MTases_sf"/>
</dbReference>
<dbReference type="NCBIfam" id="TIGR00755">
    <property type="entry name" value="ksgA"/>
    <property type="match status" value="1"/>
</dbReference>
<dbReference type="PANTHER" id="PTHR11727">
    <property type="entry name" value="DIMETHYLADENOSINE TRANSFERASE"/>
    <property type="match status" value="1"/>
</dbReference>
<dbReference type="PANTHER" id="PTHR11727:SF7">
    <property type="entry name" value="DIMETHYLADENOSINE TRANSFERASE-RELATED"/>
    <property type="match status" value="1"/>
</dbReference>
<dbReference type="Pfam" id="PF00398">
    <property type="entry name" value="RrnaAD"/>
    <property type="match status" value="1"/>
</dbReference>
<dbReference type="SMART" id="SM00650">
    <property type="entry name" value="rADc"/>
    <property type="match status" value="1"/>
</dbReference>
<dbReference type="SUPFAM" id="SSF53335">
    <property type="entry name" value="S-adenosyl-L-methionine-dependent methyltransferases"/>
    <property type="match status" value="1"/>
</dbReference>
<dbReference type="PROSITE" id="PS01131">
    <property type="entry name" value="RRNA_A_DIMETH"/>
    <property type="match status" value="1"/>
</dbReference>
<dbReference type="PROSITE" id="PS51689">
    <property type="entry name" value="SAM_RNA_A_N6_MT"/>
    <property type="match status" value="1"/>
</dbReference>
<gene>
    <name evidence="1" type="primary">rsmA</name>
    <name evidence="1" type="synonym">ksgA</name>
    <name type="ordered locus">PD_1208</name>
</gene>
<sequence length="265" mass="29327">MESRLFNTPAKKAFGQHFLVDRYYIDRIIHAINPQPNDHIVEIGPGQGAITLPLLKCCGSLTAIELDRDLIAPLTAAATPIGKLDIIHRDVLTVDLSILAKQGNKKLRLVGNLPYNISSPILFHVLQQAAIIADMHFMLQKEVVDRMAAPPGSKVYGRLSVMLQAWCEVTTMFVVPPDAFQPPPKVNSAITRLVPRDPTTIRIADTKRFSDIVRAAFGQRRKTLRNSLADICTPAHFEHAGIRTNARAEQLEVTEFIALANAKNT</sequence>
<name>RSMA_XYLFT</name>
<organism>
    <name type="scientific">Xylella fastidiosa (strain Temecula1 / ATCC 700964)</name>
    <dbReference type="NCBI Taxonomy" id="183190"/>
    <lineage>
        <taxon>Bacteria</taxon>
        <taxon>Pseudomonadati</taxon>
        <taxon>Pseudomonadota</taxon>
        <taxon>Gammaproteobacteria</taxon>
        <taxon>Lysobacterales</taxon>
        <taxon>Lysobacteraceae</taxon>
        <taxon>Xylella</taxon>
    </lineage>
</organism>
<accession>Q87C85</accession>
<comment type="function">
    <text evidence="1">Specifically dimethylates two adjacent adenosines (A1518 and A1519) in the loop of a conserved hairpin near the 3'-end of 16S rRNA in the 30S particle. May play a critical role in biogenesis of 30S subunits.</text>
</comment>
<comment type="catalytic activity">
    <reaction evidence="1">
        <text>adenosine(1518)/adenosine(1519) in 16S rRNA + 4 S-adenosyl-L-methionine = N(6)-dimethyladenosine(1518)/N(6)-dimethyladenosine(1519) in 16S rRNA + 4 S-adenosyl-L-homocysteine + 4 H(+)</text>
        <dbReference type="Rhea" id="RHEA:19609"/>
        <dbReference type="Rhea" id="RHEA-COMP:10232"/>
        <dbReference type="Rhea" id="RHEA-COMP:10233"/>
        <dbReference type="ChEBI" id="CHEBI:15378"/>
        <dbReference type="ChEBI" id="CHEBI:57856"/>
        <dbReference type="ChEBI" id="CHEBI:59789"/>
        <dbReference type="ChEBI" id="CHEBI:74411"/>
        <dbReference type="ChEBI" id="CHEBI:74493"/>
        <dbReference type="EC" id="2.1.1.182"/>
    </reaction>
</comment>
<comment type="subcellular location">
    <subcellularLocation>
        <location evidence="1">Cytoplasm</location>
    </subcellularLocation>
</comment>
<comment type="similarity">
    <text evidence="1">Belongs to the class I-like SAM-binding methyltransferase superfamily. rRNA adenine N(6)-methyltransferase family. RsmA subfamily.</text>
</comment>